<organism>
    <name type="scientific">Solanum tuberosum</name>
    <name type="common">Potato</name>
    <dbReference type="NCBI Taxonomy" id="4113"/>
    <lineage>
        <taxon>Eukaryota</taxon>
        <taxon>Viridiplantae</taxon>
        <taxon>Streptophyta</taxon>
        <taxon>Embryophyta</taxon>
        <taxon>Tracheophyta</taxon>
        <taxon>Spermatophyta</taxon>
        <taxon>Magnoliopsida</taxon>
        <taxon>eudicotyledons</taxon>
        <taxon>Gunneridae</taxon>
        <taxon>Pentapetalae</taxon>
        <taxon>asterids</taxon>
        <taxon>lamiids</taxon>
        <taxon>Solanales</taxon>
        <taxon>Solanaceae</taxon>
        <taxon>Solanoideae</taxon>
        <taxon>Solaneae</taxon>
        <taxon>Solanum</taxon>
    </lineage>
</organism>
<reference key="1">
    <citation type="journal article" date="1996" name="Plant J.">
        <title>New insights into the composition, molecular mass and stoichiometry of the protein complexes of plant mitochondria.</title>
        <authorList>
            <person name="Jansch L."/>
            <person name="Kruft V."/>
            <person name="Schmitz U.K."/>
            <person name="Braun H.P."/>
        </authorList>
    </citation>
    <scope>PROTEIN SEQUENCE</scope>
    <source>
        <tissue>Tuber</tissue>
    </source>
</reference>
<evidence type="ECO:0000250" key="1">
    <source>
        <dbReference type="UniProtKB" id="P00410"/>
    </source>
</evidence>
<evidence type="ECO:0000305" key="2"/>
<gene>
    <name type="primary">COX2</name>
    <name type="synonym">COII</name>
    <name type="synonym">COXII</name>
</gene>
<name>COX2_SOLTU</name>
<proteinExistence type="evidence at protein level"/>
<accession>P80498</accession>
<protein>
    <recommendedName>
        <fullName>Cytochrome c oxidase subunit 2</fullName>
        <ecNumber>7.1.1.9</ecNumber>
    </recommendedName>
    <alternativeName>
        <fullName>Cytochrome c oxidase polypeptide II</fullName>
    </alternativeName>
</protein>
<sequence length="26" mass="2875">DAAEPWQLGFQDAATPIMQGIIDLHH</sequence>
<feature type="chain" id="PRO_0000183692" description="Cytochrome c oxidase subunit 2">
    <location>
        <begin position="1"/>
        <end position="26" status="greater than"/>
    </location>
</feature>
<feature type="non-terminal residue">
    <location>
        <position position="26"/>
    </location>
</feature>
<keyword id="KW-0186">Copper</keyword>
<keyword id="KW-0903">Direct protein sequencing</keyword>
<keyword id="KW-0249">Electron transport</keyword>
<keyword id="KW-0472">Membrane</keyword>
<keyword id="KW-0496">Mitochondrion</keyword>
<keyword id="KW-0999">Mitochondrion inner membrane</keyword>
<keyword id="KW-1185">Reference proteome</keyword>
<keyword id="KW-0679">Respiratory chain</keyword>
<keyword id="KW-1278">Translocase</keyword>
<keyword id="KW-0812">Transmembrane</keyword>
<keyword id="KW-0813">Transport</keyword>
<comment type="function">
    <text evidence="1">Component of the cytochrome c oxidase, the last enzyme in the mitochondrial electron transport chain which drives oxidative phosphorylation. The respiratory chain contains 3 multisubunit complexes succinate dehydrogenase (complex II, CII), ubiquinol-cytochrome c oxidoreductase (cytochrome b-c1 complex, complex III, CIII) and cytochrome c oxidase (complex IV, CIV), that cooperate to transfer electrons derived from NADH and succinate to molecular oxygen, creating an electrochemical gradient over the inner membrane that drives transmembrane transport and the ATP synthase. Cytochrome c oxidase is the component of the respiratory chain that catalyzes the reduction of oxygen to water. Electrons originating from reduced cytochrome c in the intermembrane space (IMS) are transferred via the dinuclear copper A center (CU(A)) of subunit 2 and heme A of subunit 1 to the active site in subunit 1, a binuclear center (BNC) formed by heme A3 and copper B (CU(B)). The BNC reduces molecular oxygen to 2 water molecules using 4 electrons from cytochrome c in the IMS and 4 protons from the mitochondrial matrix.</text>
</comment>
<comment type="catalytic activity">
    <reaction evidence="1">
        <text>4 Fe(II)-[cytochrome c] + O2 + 8 H(+)(in) = 4 Fe(III)-[cytochrome c] + 2 H2O + 4 H(+)(out)</text>
        <dbReference type="Rhea" id="RHEA:11436"/>
        <dbReference type="Rhea" id="RHEA-COMP:10350"/>
        <dbReference type="Rhea" id="RHEA-COMP:14399"/>
        <dbReference type="ChEBI" id="CHEBI:15377"/>
        <dbReference type="ChEBI" id="CHEBI:15378"/>
        <dbReference type="ChEBI" id="CHEBI:15379"/>
        <dbReference type="ChEBI" id="CHEBI:29033"/>
        <dbReference type="ChEBI" id="CHEBI:29034"/>
        <dbReference type="EC" id="7.1.1.9"/>
    </reaction>
    <physiologicalReaction direction="left-to-right" evidence="1">
        <dbReference type="Rhea" id="RHEA:11437"/>
    </physiologicalReaction>
</comment>
<comment type="cofactor">
    <cofactor evidence="1">
        <name>Cu cation</name>
        <dbReference type="ChEBI" id="CHEBI:23378"/>
    </cofactor>
    <text evidence="1">Binds a dinuclear copper A center per subunit.</text>
</comment>
<comment type="subunit">
    <text evidence="1">Component of the cytochrome c oxidase (complex IV, CIV), a multisubunit enzyme composed of a catalytic core of 3 subunits and several supernumerary subunits. The complex exists as a monomer or a dimer and forms supercomplexes (SCs) in the inner mitochondrial membrane with ubiquinol-cytochrome c oxidoreductase (cytochrome b-c1 complex, complex III, CIII).</text>
</comment>
<comment type="subcellular location">
    <subcellularLocation>
        <location evidence="1">Mitochondrion inner membrane</location>
        <topology evidence="1">Multi-pass membrane protein</topology>
    </subcellularLocation>
</comment>
<comment type="similarity">
    <text evidence="2">Belongs to the cytochrome c oxidase subunit 2 family.</text>
</comment>
<dbReference type="EC" id="7.1.1.9"/>
<dbReference type="SMR" id="P80498"/>
<dbReference type="STRING" id="4113.P80498"/>
<dbReference type="InParanoid" id="P80498"/>
<dbReference type="Proteomes" id="UP000011115">
    <property type="component" value="Unassembled WGS sequence"/>
</dbReference>
<dbReference type="GO" id="GO:0005743">
    <property type="term" value="C:mitochondrial inner membrane"/>
    <property type="evidence" value="ECO:0007669"/>
    <property type="project" value="UniProtKB-SubCell"/>
</dbReference>
<dbReference type="GO" id="GO:0004129">
    <property type="term" value="F:cytochrome-c oxidase activity"/>
    <property type="evidence" value="ECO:0007669"/>
    <property type="project" value="UniProtKB-EC"/>
</dbReference>
<dbReference type="GO" id="GO:0022900">
    <property type="term" value="P:electron transport chain"/>
    <property type="evidence" value="ECO:0007669"/>
    <property type="project" value="InterPro"/>
</dbReference>
<dbReference type="Gene3D" id="1.10.287.90">
    <property type="match status" value="1"/>
</dbReference>
<dbReference type="InterPro" id="IPR011759">
    <property type="entry name" value="Cyt_c_oxidase_su2_TM_dom"/>
</dbReference>
<dbReference type="InterPro" id="IPR036257">
    <property type="entry name" value="Cyt_c_oxidase_su2_TM_sf"/>
</dbReference>
<dbReference type="Pfam" id="PF02790">
    <property type="entry name" value="COX2_TM"/>
    <property type="match status" value="1"/>
</dbReference>
<dbReference type="SUPFAM" id="SSF81464">
    <property type="entry name" value="Cytochrome c oxidase subunit II-like, transmembrane region"/>
    <property type="match status" value="1"/>
</dbReference>